<organism>
    <name type="scientific">Ralstonia nicotianae (strain ATCC BAA-1114 / GMI1000)</name>
    <name type="common">Ralstonia solanacearum</name>
    <dbReference type="NCBI Taxonomy" id="267608"/>
    <lineage>
        <taxon>Bacteria</taxon>
        <taxon>Pseudomonadati</taxon>
        <taxon>Pseudomonadota</taxon>
        <taxon>Betaproteobacteria</taxon>
        <taxon>Burkholderiales</taxon>
        <taxon>Burkholderiaceae</taxon>
        <taxon>Ralstonia</taxon>
        <taxon>Ralstonia solanacearum species complex</taxon>
    </lineage>
</organism>
<protein>
    <recommendedName>
        <fullName evidence="1">Phosphate import ATP-binding protein PstB</fullName>
        <ecNumber evidence="1">7.3.2.1</ecNumber>
    </recommendedName>
    <alternativeName>
        <fullName evidence="1">ABC phosphate transporter</fullName>
    </alternativeName>
    <alternativeName>
        <fullName evidence="1">Phosphate-transporting ATPase</fullName>
    </alternativeName>
</protein>
<name>PSTB_RALN1</name>
<sequence length="263" mass="29784">MTMTATSIDVRVQSPKIDVRDLNFYYGKFHALKNISLQIPEKQVTAFIGPSGCGKSTLLRTFNKMYALYPEQRAEGEINMDGENLLTSRMDIALLRAKVGMVFQKPTPFPMSIYDNIAFGVKLFERLSRSEMDDRVEWALTKAALWGEVKDKLHQSGYGLSGGQQQRLCIARGIAIRPEVLLLDEPCSALDPISTGKIEELIAELKDDYTVVIVTHNMQQAARCSDYTAYMYLGELIEFGETEKIFIKPRRKETEDYITGRFG</sequence>
<reference key="1">
    <citation type="journal article" date="2002" name="Nature">
        <title>Genome sequence of the plant pathogen Ralstonia solanacearum.</title>
        <authorList>
            <person name="Salanoubat M."/>
            <person name="Genin S."/>
            <person name="Artiguenave F."/>
            <person name="Gouzy J."/>
            <person name="Mangenot S."/>
            <person name="Arlat M."/>
            <person name="Billault A."/>
            <person name="Brottier P."/>
            <person name="Camus J.-C."/>
            <person name="Cattolico L."/>
            <person name="Chandler M."/>
            <person name="Choisne N."/>
            <person name="Claudel-Renard C."/>
            <person name="Cunnac S."/>
            <person name="Demange N."/>
            <person name="Gaspin C."/>
            <person name="Lavie M."/>
            <person name="Moisan A."/>
            <person name="Robert C."/>
            <person name="Saurin W."/>
            <person name="Schiex T."/>
            <person name="Siguier P."/>
            <person name="Thebault P."/>
            <person name="Whalen M."/>
            <person name="Wincker P."/>
            <person name="Levy M."/>
            <person name="Weissenbach J."/>
            <person name="Boucher C.A."/>
        </authorList>
    </citation>
    <scope>NUCLEOTIDE SEQUENCE [LARGE SCALE GENOMIC DNA]</scope>
    <source>
        <strain>ATCC BAA-1114 / GMI1000</strain>
    </source>
</reference>
<proteinExistence type="inferred from homology"/>
<comment type="function">
    <text evidence="1">Part of the ABC transporter complex PstSACB involved in phosphate import. Responsible for energy coupling to the transport system.</text>
</comment>
<comment type="catalytic activity">
    <reaction evidence="1">
        <text>phosphate(out) + ATP + H2O = ADP + 2 phosphate(in) + H(+)</text>
        <dbReference type="Rhea" id="RHEA:24440"/>
        <dbReference type="ChEBI" id="CHEBI:15377"/>
        <dbReference type="ChEBI" id="CHEBI:15378"/>
        <dbReference type="ChEBI" id="CHEBI:30616"/>
        <dbReference type="ChEBI" id="CHEBI:43474"/>
        <dbReference type="ChEBI" id="CHEBI:456216"/>
        <dbReference type="EC" id="7.3.2.1"/>
    </reaction>
</comment>
<comment type="subunit">
    <text evidence="1">The complex is composed of two ATP-binding proteins (PstB), two transmembrane proteins (PstC and PstA) and a solute-binding protein (PstS).</text>
</comment>
<comment type="subcellular location">
    <subcellularLocation>
        <location evidence="1">Cell inner membrane</location>
        <topology evidence="1">Peripheral membrane protein</topology>
    </subcellularLocation>
</comment>
<comment type="similarity">
    <text evidence="1">Belongs to the ABC transporter superfamily. Phosphate importer (TC 3.A.1.7) family.</text>
</comment>
<feature type="chain" id="PRO_0000092867" description="Phosphate import ATP-binding protein PstB">
    <location>
        <begin position="1"/>
        <end position="263"/>
    </location>
</feature>
<feature type="domain" description="ABC transporter" evidence="1">
    <location>
        <begin position="17"/>
        <end position="258"/>
    </location>
</feature>
<feature type="binding site" evidence="1">
    <location>
        <begin position="49"/>
        <end position="56"/>
    </location>
    <ligand>
        <name>ATP</name>
        <dbReference type="ChEBI" id="CHEBI:30616"/>
    </ligand>
</feature>
<evidence type="ECO:0000255" key="1">
    <source>
        <dbReference type="HAMAP-Rule" id="MF_01702"/>
    </source>
</evidence>
<keyword id="KW-0067">ATP-binding</keyword>
<keyword id="KW-0997">Cell inner membrane</keyword>
<keyword id="KW-1003">Cell membrane</keyword>
<keyword id="KW-0472">Membrane</keyword>
<keyword id="KW-0547">Nucleotide-binding</keyword>
<keyword id="KW-0592">Phosphate transport</keyword>
<keyword id="KW-1185">Reference proteome</keyword>
<keyword id="KW-1278">Translocase</keyword>
<keyword id="KW-0813">Transport</keyword>
<dbReference type="EC" id="7.3.2.1" evidence="1"/>
<dbReference type="EMBL" id="AL646052">
    <property type="protein sequence ID" value="CAD15234.1"/>
    <property type="molecule type" value="Genomic_DNA"/>
</dbReference>
<dbReference type="SMR" id="Q8XZ72"/>
<dbReference type="STRING" id="267608.RSc1532"/>
<dbReference type="EnsemblBacteria" id="CAD15234">
    <property type="protein sequence ID" value="CAD15234"/>
    <property type="gene ID" value="RSc1532"/>
</dbReference>
<dbReference type="KEGG" id="rso:RSc1532"/>
<dbReference type="eggNOG" id="COG1117">
    <property type="taxonomic scope" value="Bacteria"/>
</dbReference>
<dbReference type="HOGENOM" id="CLU_000604_1_22_4"/>
<dbReference type="Proteomes" id="UP000001436">
    <property type="component" value="Chromosome"/>
</dbReference>
<dbReference type="GO" id="GO:0005886">
    <property type="term" value="C:plasma membrane"/>
    <property type="evidence" value="ECO:0007669"/>
    <property type="project" value="UniProtKB-SubCell"/>
</dbReference>
<dbReference type="GO" id="GO:0005524">
    <property type="term" value="F:ATP binding"/>
    <property type="evidence" value="ECO:0007669"/>
    <property type="project" value="UniProtKB-KW"/>
</dbReference>
<dbReference type="GO" id="GO:0016887">
    <property type="term" value="F:ATP hydrolysis activity"/>
    <property type="evidence" value="ECO:0007669"/>
    <property type="project" value="InterPro"/>
</dbReference>
<dbReference type="GO" id="GO:0015415">
    <property type="term" value="F:ATPase-coupled phosphate ion transmembrane transporter activity"/>
    <property type="evidence" value="ECO:0007669"/>
    <property type="project" value="UniProtKB-EC"/>
</dbReference>
<dbReference type="GO" id="GO:0035435">
    <property type="term" value="P:phosphate ion transmembrane transport"/>
    <property type="evidence" value="ECO:0007669"/>
    <property type="project" value="InterPro"/>
</dbReference>
<dbReference type="CDD" id="cd03260">
    <property type="entry name" value="ABC_PstB_phosphate_transporter"/>
    <property type="match status" value="1"/>
</dbReference>
<dbReference type="FunFam" id="3.40.50.300:FF:000132">
    <property type="entry name" value="Phosphate import ATP-binding protein PstB"/>
    <property type="match status" value="1"/>
</dbReference>
<dbReference type="Gene3D" id="3.40.50.300">
    <property type="entry name" value="P-loop containing nucleotide triphosphate hydrolases"/>
    <property type="match status" value="1"/>
</dbReference>
<dbReference type="InterPro" id="IPR003593">
    <property type="entry name" value="AAA+_ATPase"/>
</dbReference>
<dbReference type="InterPro" id="IPR003439">
    <property type="entry name" value="ABC_transporter-like_ATP-bd"/>
</dbReference>
<dbReference type="InterPro" id="IPR017871">
    <property type="entry name" value="ABC_transporter-like_CS"/>
</dbReference>
<dbReference type="InterPro" id="IPR027417">
    <property type="entry name" value="P-loop_NTPase"/>
</dbReference>
<dbReference type="InterPro" id="IPR005670">
    <property type="entry name" value="PstB-like"/>
</dbReference>
<dbReference type="NCBIfam" id="TIGR00972">
    <property type="entry name" value="3a0107s01c2"/>
    <property type="match status" value="1"/>
</dbReference>
<dbReference type="PANTHER" id="PTHR43423">
    <property type="entry name" value="ABC TRANSPORTER I FAMILY MEMBER 17"/>
    <property type="match status" value="1"/>
</dbReference>
<dbReference type="PANTHER" id="PTHR43423:SF3">
    <property type="entry name" value="PHOSPHATE IMPORT ATP-BINDING PROTEIN PSTB"/>
    <property type="match status" value="1"/>
</dbReference>
<dbReference type="Pfam" id="PF00005">
    <property type="entry name" value="ABC_tran"/>
    <property type="match status" value="1"/>
</dbReference>
<dbReference type="SMART" id="SM00382">
    <property type="entry name" value="AAA"/>
    <property type="match status" value="1"/>
</dbReference>
<dbReference type="SUPFAM" id="SSF52540">
    <property type="entry name" value="P-loop containing nucleoside triphosphate hydrolases"/>
    <property type="match status" value="1"/>
</dbReference>
<dbReference type="PROSITE" id="PS00211">
    <property type="entry name" value="ABC_TRANSPORTER_1"/>
    <property type="match status" value="1"/>
</dbReference>
<dbReference type="PROSITE" id="PS50893">
    <property type="entry name" value="ABC_TRANSPORTER_2"/>
    <property type="match status" value="1"/>
</dbReference>
<dbReference type="PROSITE" id="PS51238">
    <property type="entry name" value="PSTB"/>
    <property type="match status" value="1"/>
</dbReference>
<accession>Q8XZ72</accession>
<gene>
    <name evidence="1" type="primary">pstB</name>
    <name type="ordered locus">RSc1532</name>
    <name type="ORF">RS03772</name>
</gene>